<gene>
    <name evidence="1" type="primary">rplE</name>
    <name type="ordered locus">JJD26997_2069</name>
</gene>
<sequence length="181" mass="20228">MMRLKEKYNQSIKPALVKEFDIKNPMLIPVIEKVVISVGAGELAKDQKVLQNVADTISLIAGQKAVITKAKKSVAGFKVREGFPIGVMVTLRKENMYAFLDKLISIALPRVKDFRGLSRDGFDGRGNYNFGLDEQLMFPEVEYDKILRTHGMNISIVTTAQNDKQAQKLLELIGVPFTKGK</sequence>
<comment type="function">
    <text evidence="1">This is one of the proteins that bind and probably mediate the attachment of the 5S RNA into the large ribosomal subunit, where it forms part of the central protuberance. In the 70S ribosome it contacts protein S13 of the 30S subunit (bridge B1b), connecting the 2 subunits; this bridge is implicated in subunit movement. Contacts the P site tRNA; the 5S rRNA and some of its associated proteins might help stabilize positioning of ribosome-bound tRNAs.</text>
</comment>
<comment type="subunit">
    <text evidence="1">Part of the 50S ribosomal subunit; part of the 5S rRNA/L5/L18/L25 subcomplex. Contacts the 5S rRNA and the P site tRNA. Forms a bridge to the 30S subunit in the 70S ribosome.</text>
</comment>
<comment type="similarity">
    <text evidence="1">Belongs to the universal ribosomal protein uL5 family.</text>
</comment>
<organism>
    <name type="scientific">Campylobacter jejuni subsp. doylei (strain ATCC BAA-1458 / RM4099 / 269.97)</name>
    <dbReference type="NCBI Taxonomy" id="360109"/>
    <lineage>
        <taxon>Bacteria</taxon>
        <taxon>Pseudomonadati</taxon>
        <taxon>Campylobacterota</taxon>
        <taxon>Epsilonproteobacteria</taxon>
        <taxon>Campylobacterales</taxon>
        <taxon>Campylobacteraceae</taxon>
        <taxon>Campylobacter</taxon>
    </lineage>
</organism>
<name>RL5_CAMJD</name>
<feature type="chain" id="PRO_1000052714" description="Large ribosomal subunit protein uL5">
    <location>
        <begin position="1"/>
        <end position="181"/>
    </location>
</feature>
<accession>A7H644</accession>
<proteinExistence type="inferred from homology"/>
<protein>
    <recommendedName>
        <fullName evidence="1">Large ribosomal subunit protein uL5</fullName>
    </recommendedName>
    <alternativeName>
        <fullName evidence="2">50S ribosomal protein L5</fullName>
    </alternativeName>
</protein>
<reference key="1">
    <citation type="submission" date="2007-07" db="EMBL/GenBank/DDBJ databases">
        <title>Complete genome sequence of Campylobacter jejuni subsp doylei 269.97 isolated from human blood.</title>
        <authorList>
            <person name="Fouts D.E."/>
            <person name="Mongodin E.F."/>
            <person name="Puiu D."/>
            <person name="Sebastian Y."/>
            <person name="Miller W.G."/>
            <person name="Mandrell R.E."/>
            <person name="Lastovica A.J."/>
            <person name="Nelson K.E."/>
        </authorList>
    </citation>
    <scope>NUCLEOTIDE SEQUENCE [LARGE SCALE GENOMIC DNA]</scope>
    <source>
        <strain>ATCC BAA-1458 / RM4099 / 269.97</strain>
    </source>
</reference>
<evidence type="ECO:0000255" key="1">
    <source>
        <dbReference type="HAMAP-Rule" id="MF_01333"/>
    </source>
</evidence>
<evidence type="ECO:0000305" key="2"/>
<keyword id="KW-0687">Ribonucleoprotein</keyword>
<keyword id="KW-0689">Ribosomal protein</keyword>
<keyword id="KW-0694">RNA-binding</keyword>
<keyword id="KW-0699">rRNA-binding</keyword>
<keyword id="KW-0820">tRNA-binding</keyword>
<dbReference type="EMBL" id="CP000768">
    <property type="protein sequence ID" value="ABS43626.1"/>
    <property type="molecule type" value="Genomic_DNA"/>
</dbReference>
<dbReference type="SMR" id="A7H644"/>
<dbReference type="KEGG" id="cjd:JJD26997_2069"/>
<dbReference type="HOGENOM" id="CLU_061015_2_1_7"/>
<dbReference type="Proteomes" id="UP000002302">
    <property type="component" value="Chromosome"/>
</dbReference>
<dbReference type="GO" id="GO:1990904">
    <property type="term" value="C:ribonucleoprotein complex"/>
    <property type="evidence" value="ECO:0007669"/>
    <property type="project" value="UniProtKB-KW"/>
</dbReference>
<dbReference type="GO" id="GO:0005840">
    <property type="term" value="C:ribosome"/>
    <property type="evidence" value="ECO:0007669"/>
    <property type="project" value="UniProtKB-KW"/>
</dbReference>
<dbReference type="GO" id="GO:0019843">
    <property type="term" value="F:rRNA binding"/>
    <property type="evidence" value="ECO:0007669"/>
    <property type="project" value="UniProtKB-UniRule"/>
</dbReference>
<dbReference type="GO" id="GO:0003735">
    <property type="term" value="F:structural constituent of ribosome"/>
    <property type="evidence" value="ECO:0007669"/>
    <property type="project" value="InterPro"/>
</dbReference>
<dbReference type="GO" id="GO:0000049">
    <property type="term" value="F:tRNA binding"/>
    <property type="evidence" value="ECO:0007669"/>
    <property type="project" value="UniProtKB-UniRule"/>
</dbReference>
<dbReference type="GO" id="GO:0006412">
    <property type="term" value="P:translation"/>
    <property type="evidence" value="ECO:0007669"/>
    <property type="project" value="UniProtKB-UniRule"/>
</dbReference>
<dbReference type="FunFam" id="3.30.1440.10:FF:000001">
    <property type="entry name" value="50S ribosomal protein L5"/>
    <property type="match status" value="1"/>
</dbReference>
<dbReference type="Gene3D" id="3.30.1440.10">
    <property type="match status" value="1"/>
</dbReference>
<dbReference type="HAMAP" id="MF_01333_B">
    <property type="entry name" value="Ribosomal_uL5_B"/>
    <property type="match status" value="1"/>
</dbReference>
<dbReference type="InterPro" id="IPR002132">
    <property type="entry name" value="Ribosomal_uL5"/>
</dbReference>
<dbReference type="InterPro" id="IPR020930">
    <property type="entry name" value="Ribosomal_uL5_bac-type"/>
</dbReference>
<dbReference type="InterPro" id="IPR031309">
    <property type="entry name" value="Ribosomal_uL5_C"/>
</dbReference>
<dbReference type="InterPro" id="IPR020929">
    <property type="entry name" value="Ribosomal_uL5_CS"/>
</dbReference>
<dbReference type="InterPro" id="IPR022803">
    <property type="entry name" value="Ribosomal_uL5_dom_sf"/>
</dbReference>
<dbReference type="InterPro" id="IPR031310">
    <property type="entry name" value="Ribosomal_uL5_N"/>
</dbReference>
<dbReference type="NCBIfam" id="NF000585">
    <property type="entry name" value="PRK00010.1"/>
    <property type="match status" value="1"/>
</dbReference>
<dbReference type="PANTHER" id="PTHR11994">
    <property type="entry name" value="60S RIBOSOMAL PROTEIN L11-RELATED"/>
    <property type="match status" value="1"/>
</dbReference>
<dbReference type="Pfam" id="PF00281">
    <property type="entry name" value="Ribosomal_L5"/>
    <property type="match status" value="1"/>
</dbReference>
<dbReference type="Pfam" id="PF00673">
    <property type="entry name" value="Ribosomal_L5_C"/>
    <property type="match status" value="1"/>
</dbReference>
<dbReference type="PIRSF" id="PIRSF002161">
    <property type="entry name" value="Ribosomal_L5"/>
    <property type="match status" value="1"/>
</dbReference>
<dbReference type="SUPFAM" id="SSF55282">
    <property type="entry name" value="RL5-like"/>
    <property type="match status" value="1"/>
</dbReference>
<dbReference type="PROSITE" id="PS00358">
    <property type="entry name" value="RIBOSOMAL_L5"/>
    <property type="match status" value="1"/>
</dbReference>